<organism>
    <name type="scientific">Photobacterium profundum (strain SS9)</name>
    <dbReference type="NCBI Taxonomy" id="298386"/>
    <lineage>
        <taxon>Bacteria</taxon>
        <taxon>Pseudomonadati</taxon>
        <taxon>Pseudomonadota</taxon>
        <taxon>Gammaproteobacteria</taxon>
        <taxon>Vibrionales</taxon>
        <taxon>Vibrionaceae</taxon>
        <taxon>Photobacterium</taxon>
    </lineage>
</organism>
<protein>
    <recommendedName>
        <fullName evidence="1">Chaperonin GroEL</fullName>
        <ecNumber evidence="1">5.6.1.7</ecNumber>
    </recommendedName>
    <alternativeName>
        <fullName evidence="1">60 kDa chaperonin</fullName>
    </alternativeName>
    <alternativeName>
        <fullName evidence="1">Chaperonin-60</fullName>
        <shortName evidence="1">Cpn60</shortName>
    </alternativeName>
</protein>
<evidence type="ECO:0000255" key="1">
    <source>
        <dbReference type="HAMAP-Rule" id="MF_00600"/>
    </source>
</evidence>
<feature type="chain" id="PRO_0000063476" description="Chaperonin GroEL">
    <location>
        <begin position="1"/>
        <end position="550"/>
    </location>
</feature>
<feature type="binding site" evidence="1">
    <location>
        <begin position="30"/>
        <end position="33"/>
    </location>
    <ligand>
        <name>ATP</name>
        <dbReference type="ChEBI" id="CHEBI:30616"/>
    </ligand>
</feature>
<feature type="binding site" evidence="1">
    <location>
        <position position="51"/>
    </location>
    <ligand>
        <name>ATP</name>
        <dbReference type="ChEBI" id="CHEBI:30616"/>
    </ligand>
</feature>
<feature type="binding site" evidence="1">
    <location>
        <begin position="87"/>
        <end position="91"/>
    </location>
    <ligand>
        <name>ATP</name>
        <dbReference type="ChEBI" id="CHEBI:30616"/>
    </ligand>
</feature>
<feature type="binding site" evidence="1">
    <location>
        <position position="415"/>
    </location>
    <ligand>
        <name>ATP</name>
        <dbReference type="ChEBI" id="CHEBI:30616"/>
    </ligand>
</feature>
<feature type="binding site" evidence="1">
    <location>
        <begin position="481"/>
        <end position="483"/>
    </location>
    <ligand>
        <name>ATP</name>
        <dbReference type="ChEBI" id="CHEBI:30616"/>
    </ligand>
</feature>
<feature type="binding site" evidence="1">
    <location>
        <position position="497"/>
    </location>
    <ligand>
        <name>ATP</name>
        <dbReference type="ChEBI" id="CHEBI:30616"/>
    </ligand>
</feature>
<keyword id="KW-0067">ATP-binding</keyword>
<keyword id="KW-0143">Chaperone</keyword>
<keyword id="KW-0963">Cytoplasm</keyword>
<keyword id="KW-0413">Isomerase</keyword>
<keyword id="KW-0547">Nucleotide-binding</keyword>
<keyword id="KW-1185">Reference proteome</keyword>
<proteinExistence type="inferred from homology"/>
<name>CH60_PHOPR</name>
<reference key="1">
    <citation type="journal article" date="2005" name="Science">
        <title>Life at depth: Photobacterium profundum genome sequence and expression analysis.</title>
        <authorList>
            <person name="Vezzi A."/>
            <person name="Campanaro S."/>
            <person name="D'Angelo M."/>
            <person name="Simonato F."/>
            <person name="Vitulo N."/>
            <person name="Lauro F.M."/>
            <person name="Cestaro A."/>
            <person name="Malacrida G."/>
            <person name="Simionati B."/>
            <person name="Cannata N."/>
            <person name="Romualdi C."/>
            <person name="Bartlett D.H."/>
            <person name="Valle G."/>
        </authorList>
    </citation>
    <scope>NUCLEOTIDE SEQUENCE [LARGE SCALE GENOMIC DNA]</scope>
    <source>
        <strain>ATCC BAA-1253 / SS9</strain>
    </source>
</reference>
<comment type="function">
    <text evidence="1">Together with its co-chaperonin GroES, plays an essential role in assisting protein folding. The GroEL-GroES system forms a nano-cage that allows encapsulation of the non-native substrate proteins and provides a physical environment optimized to promote and accelerate protein folding.</text>
</comment>
<comment type="catalytic activity">
    <reaction evidence="1">
        <text>ATP + H2O + a folded polypeptide = ADP + phosphate + an unfolded polypeptide.</text>
        <dbReference type="EC" id="5.6.1.7"/>
    </reaction>
</comment>
<comment type="subunit">
    <text evidence="1">Forms a cylinder of 14 subunits composed of two heptameric rings stacked back-to-back. Interacts with the co-chaperonin GroES.</text>
</comment>
<comment type="subcellular location">
    <subcellularLocation>
        <location evidence="1">Cytoplasm</location>
    </subcellularLocation>
</comment>
<comment type="similarity">
    <text evidence="1">Belongs to the chaperonin (HSP60) family.</text>
</comment>
<gene>
    <name evidence="1" type="primary">groEL</name>
    <name evidence="1" type="synonym">groL</name>
    <name type="ordered locus">PBPRA3387</name>
</gene>
<sequence>MAAKDVKFGNDARIKMLEGVNVLADAVKVTLGPKGRNVVLDKSFGAPTITKDGVSVAREIELEDKFQNMGAQMVKEVASQANDAAGDGTTTATVLAQSIIAEGLKAVAAGMNPMDLKRGIDKAVIAAVAALKELSVPCEDTKAIAQVGTISANADATVGNLIAEAMEKVGRDGVITVEEGQALHDELDVVEGMQFDRGYLSPYFINNQEAGSIDLESPFILLVDKKVSNIRELLPALEGVAKASRPLLIIAEDVEGEALATLVVNNMRGIVKVAAVKAPGFGDRRKSMLQDIAVLTAGTVISEEIGLELEKVQLEDLGQAKRITITKENTTIIDGAGEETMIQGRVAQIRQQIEDATSDYDKEKLQERVAKLAGGVAVIKVGAATEVEMKEKKDRVQDALHATRAAVEEGVVAGGGVALIRAASKVAASGLEGDNEEQNVGIRVALRAMESPLRQIVKNAGDEDSVVANNVRAGEGNYGYNAATGVYGDMIAMGILDPTKVTRSALQFAASVAGLMITTEAMITDMPAKDASAMPDMGGMGGMGGMGGMM</sequence>
<accession>Q6LM06</accession>
<dbReference type="EC" id="5.6.1.7" evidence="1"/>
<dbReference type="EMBL" id="CR378673">
    <property type="protein sequence ID" value="CAG21672.1"/>
    <property type="molecule type" value="Genomic_DNA"/>
</dbReference>
<dbReference type="RefSeq" id="WP_011219918.1">
    <property type="nucleotide sequence ID" value="NC_006370.1"/>
</dbReference>
<dbReference type="SMR" id="Q6LM06"/>
<dbReference type="STRING" id="298386.PBPRA3387"/>
<dbReference type="KEGG" id="ppr:PBPRA3387"/>
<dbReference type="eggNOG" id="COG0459">
    <property type="taxonomic scope" value="Bacteria"/>
</dbReference>
<dbReference type="HOGENOM" id="CLU_016503_3_0_6"/>
<dbReference type="Proteomes" id="UP000000593">
    <property type="component" value="Chromosome 1"/>
</dbReference>
<dbReference type="GO" id="GO:0005737">
    <property type="term" value="C:cytoplasm"/>
    <property type="evidence" value="ECO:0007669"/>
    <property type="project" value="UniProtKB-SubCell"/>
</dbReference>
<dbReference type="GO" id="GO:0005524">
    <property type="term" value="F:ATP binding"/>
    <property type="evidence" value="ECO:0007669"/>
    <property type="project" value="UniProtKB-UniRule"/>
</dbReference>
<dbReference type="GO" id="GO:0140662">
    <property type="term" value="F:ATP-dependent protein folding chaperone"/>
    <property type="evidence" value="ECO:0007669"/>
    <property type="project" value="InterPro"/>
</dbReference>
<dbReference type="GO" id="GO:0016853">
    <property type="term" value="F:isomerase activity"/>
    <property type="evidence" value="ECO:0007669"/>
    <property type="project" value="UniProtKB-KW"/>
</dbReference>
<dbReference type="GO" id="GO:0051082">
    <property type="term" value="F:unfolded protein binding"/>
    <property type="evidence" value="ECO:0007669"/>
    <property type="project" value="UniProtKB-UniRule"/>
</dbReference>
<dbReference type="GO" id="GO:0042026">
    <property type="term" value="P:protein refolding"/>
    <property type="evidence" value="ECO:0007669"/>
    <property type="project" value="UniProtKB-UniRule"/>
</dbReference>
<dbReference type="CDD" id="cd03344">
    <property type="entry name" value="GroEL"/>
    <property type="match status" value="1"/>
</dbReference>
<dbReference type="FunFam" id="1.10.560.10:FF:000001">
    <property type="entry name" value="60 kDa chaperonin"/>
    <property type="match status" value="1"/>
</dbReference>
<dbReference type="FunFam" id="3.50.7.10:FF:000001">
    <property type="entry name" value="60 kDa chaperonin"/>
    <property type="match status" value="1"/>
</dbReference>
<dbReference type="Gene3D" id="3.50.7.10">
    <property type="entry name" value="GroEL"/>
    <property type="match status" value="1"/>
</dbReference>
<dbReference type="Gene3D" id="1.10.560.10">
    <property type="entry name" value="GroEL-like equatorial domain"/>
    <property type="match status" value="1"/>
</dbReference>
<dbReference type="Gene3D" id="3.30.260.10">
    <property type="entry name" value="TCP-1-like chaperonin intermediate domain"/>
    <property type="match status" value="1"/>
</dbReference>
<dbReference type="HAMAP" id="MF_00600">
    <property type="entry name" value="CH60"/>
    <property type="match status" value="1"/>
</dbReference>
<dbReference type="InterPro" id="IPR018370">
    <property type="entry name" value="Chaperonin_Cpn60_CS"/>
</dbReference>
<dbReference type="InterPro" id="IPR001844">
    <property type="entry name" value="Cpn60/GroEL"/>
</dbReference>
<dbReference type="InterPro" id="IPR002423">
    <property type="entry name" value="Cpn60/GroEL/TCP-1"/>
</dbReference>
<dbReference type="InterPro" id="IPR027409">
    <property type="entry name" value="GroEL-like_apical_dom_sf"/>
</dbReference>
<dbReference type="InterPro" id="IPR027413">
    <property type="entry name" value="GROEL-like_equatorial_sf"/>
</dbReference>
<dbReference type="InterPro" id="IPR027410">
    <property type="entry name" value="TCP-1-like_intermed_sf"/>
</dbReference>
<dbReference type="NCBIfam" id="TIGR02348">
    <property type="entry name" value="GroEL"/>
    <property type="match status" value="1"/>
</dbReference>
<dbReference type="NCBIfam" id="NF000592">
    <property type="entry name" value="PRK00013.1"/>
    <property type="match status" value="1"/>
</dbReference>
<dbReference type="NCBIfam" id="NF009487">
    <property type="entry name" value="PRK12849.1"/>
    <property type="match status" value="1"/>
</dbReference>
<dbReference type="NCBIfam" id="NF009488">
    <property type="entry name" value="PRK12850.1"/>
    <property type="match status" value="1"/>
</dbReference>
<dbReference type="NCBIfam" id="NF009489">
    <property type="entry name" value="PRK12851.1"/>
    <property type="match status" value="1"/>
</dbReference>
<dbReference type="PANTHER" id="PTHR45633">
    <property type="entry name" value="60 KDA HEAT SHOCK PROTEIN, MITOCHONDRIAL"/>
    <property type="match status" value="1"/>
</dbReference>
<dbReference type="Pfam" id="PF00118">
    <property type="entry name" value="Cpn60_TCP1"/>
    <property type="match status" value="1"/>
</dbReference>
<dbReference type="PRINTS" id="PR00298">
    <property type="entry name" value="CHAPERONIN60"/>
</dbReference>
<dbReference type="SUPFAM" id="SSF52029">
    <property type="entry name" value="GroEL apical domain-like"/>
    <property type="match status" value="1"/>
</dbReference>
<dbReference type="SUPFAM" id="SSF48592">
    <property type="entry name" value="GroEL equatorial domain-like"/>
    <property type="match status" value="2"/>
</dbReference>
<dbReference type="PROSITE" id="PS00296">
    <property type="entry name" value="CHAPERONINS_CPN60"/>
    <property type="match status" value="1"/>
</dbReference>